<accession>P38760</accession>
<accession>D3DKW0</accession>
<name>MIP6_YEAST</name>
<protein>
    <recommendedName>
        <fullName>RNA-binding protein MIP6</fullName>
    </recommendedName>
    <alternativeName>
        <fullName>MEX67-interacting protein 6</fullName>
    </alternativeName>
</protein>
<reference key="1">
    <citation type="journal article" date="1994" name="Science">
        <title>Complete nucleotide sequence of Saccharomyces cerevisiae chromosome VIII.</title>
        <authorList>
            <person name="Johnston M."/>
            <person name="Andrews S."/>
            <person name="Brinkman R."/>
            <person name="Cooper J."/>
            <person name="Ding H."/>
            <person name="Dover J."/>
            <person name="Du Z."/>
            <person name="Favello A."/>
            <person name="Fulton L."/>
            <person name="Gattung S."/>
            <person name="Geisel C."/>
            <person name="Kirsten J."/>
            <person name="Kucaba T."/>
            <person name="Hillier L.W."/>
            <person name="Jier M."/>
            <person name="Johnston L."/>
            <person name="Langston Y."/>
            <person name="Latreille P."/>
            <person name="Louis E.J."/>
            <person name="Macri C."/>
            <person name="Mardis E."/>
            <person name="Menezes S."/>
            <person name="Mouser L."/>
            <person name="Nhan M."/>
            <person name="Rifkin L."/>
            <person name="Riles L."/>
            <person name="St Peter H."/>
            <person name="Trevaskis E."/>
            <person name="Vaughan K."/>
            <person name="Vignati D."/>
            <person name="Wilcox L."/>
            <person name="Wohldman P."/>
            <person name="Waterston R."/>
            <person name="Wilson R."/>
            <person name="Vaudin M."/>
        </authorList>
    </citation>
    <scope>NUCLEOTIDE SEQUENCE [LARGE SCALE GENOMIC DNA]</scope>
    <source>
        <strain>ATCC 204508 / S288c</strain>
    </source>
</reference>
<reference key="2">
    <citation type="journal article" date="2014" name="G3 (Bethesda)">
        <title>The reference genome sequence of Saccharomyces cerevisiae: Then and now.</title>
        <authorList>
            <person name="Engel S.R."/>
            <person name="Dietrich F.S."/>
            <person name="Fisk D.G."/>
            <person name="Binkley G."/>
            <person name="Balakrishnan R."/>
            <person name="Costanzo M.C."/>
            <person name="Dwight S.S."/>
            <person name="Hitz B.C."/>
            <person name="Karra K."/>
            <person name="Nash R.S."/>
            <person name="Weng S."/>
            <person name="Wong E.D."/>
            <person name="Lloyd P."/>
            <person name="Skrzypek M.S."/>
            <person name="Miyasato S.R."/>
            <person name="Simison M."/>
            <person name="Cherry J.M."/>
        </authorList>
    </citation>
    <scope>GENOME REANNOTATION</scope>
    <source>
        <strain>ATCC 204508 / S288c</strain>
    </source>
</reference>
<reference key="3">
    <citation type="journal article" date="1997" name="EMBO J.">
        <title>Mex67p, a novel factor for nuclear mRNA export, binds to both poly(A)+ RNA and nuclear pores.</title>
        <authorList>
            <person name="Segref A."/>
            <person name="Sharma K."/>
            <person name="Doye V."/>
            <person name="Hellwig A."/>
            <person name="Huber J."/>
            <person name="Luehrmann R."/>
            <person name="Hurt E."/>
        </authorList>
    </citation>
    <scope>INTERACTION WITH MEX67</scope>
</reference>
<reference key="4">
    <citation type="journal article" date="2003" name="Nature">
        <title>Global analysis of protein localization in budding yeast.</title>
        <authorList>
            <person name="Huh W.-K."/>
            <person name="Falvo J.V."/>
            <person name="Gerke L.C."/>
            <person name="Carroll A.S."/>
            <person name="Howson R.W."/>
            <person name="Weissman J.S."/>
            <person name="O'Shea E.K."/>
        </authorList>
    </citation>
    <scope>SUBCELLULAR LOCATION [LARGE SCALE ANALYSIS]</scope>
</reference>
<reference key="5">
    <citation type="journal article" date="2003" name="Nature">
        <title>Global analysis of protein expression in yeast.</title>
        <authorList>
            <person name="Ghaemmaghami S."/>
            <person name="Huh W.-K."/>
            <person name="Bower K."/>
            <person name="Howson R.W."/>
            <person name="Belle A."/>
            <person name="Dephoure N."/>
            <person name="O'Shea E.K."/>
            <person name="Weissman J.S."/>
        </authorList>
    </citation>
    <scope>LEVEL OF PROTEIN EXPRESSION [LARGE SCALE ANALYSIS]</scope>
</reference>
<dbReference type="EMBL" id="U10400">
    <property type="protein sequence ID" value="AAB68942.1"/>
    <property type="molecule type" value="Genomic_DNA"/>
</dbReference>
<dbReference type="EMBL" id="BK006934">
    <property type="protein sequence ID" value="DAA06704.1"/>
    <property type="molecule type" value="Genomic_DNA"/>
</dbReference>
<dbReference type="PIR" id="S46788">
    <property type="entry name" value="S46788"/>
</dbReference>
<dbReference type="RefSeq" id="NP_011879.1">
    <property type="nucleotide sequence ID" value="NM_001179145.1"/>
</dbReference>
<dbReference type="PDB" id="5D77">
    <property type="method" value="X-ray"/>
    <property type="resolution" value="1.30 A"/>
    <property type="chains" value="A=313-388"/>
</dbReference>
<dbReference type="PDB" id="5D78">
    <property type="method" value="X-ray"/>
    <property type="resolution" value="1.25 A"/>
    <property type="chains" value="A=313-387"/>
</dbReference>
<dbReference type="PDBsum" id="5D77"/>
<dbReference type="PDBsum" id="5D78"/>
<dbReference type="SMR" id="P38760"/>
<dbReference type="BioGRID" id="36444">
    <property type="interactions" value="38"/>
</dbReference>
<dbReference type="DIP" id="DIP-6647N"/>
<dbReference type="FunCoup" id="P38760">
    <property type="interactions" value="109"/>
</dbReference>
<dbReference type="IntAct" id="P38760">
    <property type="interactions" value="3"/>
</dbReference>
<dbReference type="STRING" id="4932.YHR015W"/>
<dbReference type="iPTMnet" id="P38760"/>
<dbReference type="PaxDb" id="4932-YHR015W"/>
<dbReference type="PeptideAtlas" id="P38760"/>
<dbReference type="EnsemblFungi" id="YHR015W_mRNA">
    <property type="protein sequence ID" value="YHR015W"/>
    <property type="gene ID" value="YHR015W"/>
</dbReference>
<dbReference type="GeneID" id="856408"/>
<dbReference type="KEGG" id="sce:YHR015W"/>
<dbReference type="AGR" id="SGD:S000001057"/>
<dbReference type="SGD" id="S000001057">
    <property type="gene designation" value="MIP6"/>
</dbReference>
<dbReference type="VEuPathDB" id="FungiDB:YHR015W"/>
<dbReference type="eggNOG" id="KOG0123">
    <property type="taxonomic scope" value="Eukaryota"/>
</dbReference>
<dbReference type="GeneTree" id="ENSGT00940000176742"/>
<dbReference type="HOGENOM" id="CLU_020939_0_0_1"/>
<dbReference type="InParanoid" id="P38760"/>
<dbReference type="OMA" id="IICGLHF"/>
<dbReference type="OrthoDB" id="1749473at2759"/>
<dbReference type="BioCyc" id="YEAST:G3O-31077-MONOMER"/>
<dbReference type="BioGRID-ORCS" id="856408">
    <property type="hits" value="2 hits in 10 CRISPR screens"/>
</dbReference>
<dbReference type="CD-CODE" id="A777E0F8">
    <property type="entry name" value="P-body"/>
</dbReference>
<dbReference type="PRO" id="PR:P38760"/>
<dbReference type="Proteomes" id="UP000002311">
    <property type="component" value="Chromosome VIII"/>
</dbReference>
<dbReference type="RNAct" id="P38760">
    <property type="molecule type" value="protein"/>
</dbReference>
<dbReference type="GO" id="GO:0010494">
    <property type="term" value="C:cytoplasmic stress granule"/>
    <property type="evidence" value="ECO:0000318"/>
    <property type="project" value="GO_Central"/>
</dbReference>
<dbReference type="GO" id="GO:0005829">
    <property type="term" value="C:cytosol"/>
    <property type="evidence" value="ECO:0000318"/>
    <property type="project" value="GO_Central"/>
</dbReference>
<dbReference type="GO" id="GO:0005634">
    <property type="term" value="C:nucleus"/>
    <property type="evidence" value="ECO:0000318"/>
    <property type="project" value="GO_Central"/>
</dbReference>
<dbReference type="GO" id="GO:0005628">
    <property type="term" value="C:prospore membrane"/>
    <property type="evidence" value="ECO:0000314"/>
    <property type="project" value="SGD"/>
</dbReference>
<dbReference type="GO" id="GO:1990904">
    <property type="term" value="C:ribonucleoprotein complex"/>
    <property type="evidence" value="ECO:0000318"/>
    <property type="project" value="GO_Central"/>
</dbReference>
<dbReference type="GO" id="GO:0003730">
    <property type="term" value="F:mRNA 3'-UTR binding"/>
    <property type="evidence" value="ECO:0000318"/>
    <property type="project" value="GO_Central"/>
</dbReference>
<dbReference type="GO" id="GO:0008143">
    <property type="term" value="F:poly(A) binding"/>
    <property type="evidence" value="ECO:0000318"/>
    <property type="project" value="GO_Central"/>
</dbReference>
<dbReference type="GO" id="GO:0008266">
    <property type="term" value="F:poly(U) RNA binding"/>
    <property type="evidence" value="ECO:0000318"/>
    <property type="project" value="GO_Central"/>
</dbReference>
<dbReference type="GO" id="GO:0003723">
    <property type="term" value="F:RNA binding"/>
    <property type="evidence" value="ECO:0000303"/>
    <property type="project" value="SGD"/>
</dbReference>
<dbReference type="GO" id="GO:0010609">
    <property type="term" value="P:mRNA localization resulting in post-transcriptional regulation of gene expression"/>
    <property type="evidence" value="ECO:0000316"/>
    <property type="project" value="SGD"/>
</dbReference>
<dbReference type="GO" id="GO:0016071">
    <property type="term" value="P:mRNA metabolic process"/>
    <property type="evidence" value="ECO:0000316"/>
    <property type="project" value="SGD"/>
</dbReference>
<dbReference type="GO" id="GO:0006417">
    <property type="term" value="P:regulation of translation"/>
    <property type="evidence" value="ECO:0000316"/>
    <property type="project" value="SGD"/>
</dbReference>
<dbReference type="GO" id="GO:0043934">
    <property type="term" value="P:sporulation"/>
    <property type="evidence" value="ECO:0000316"/>
    <property type="project" value="SGD"/>
</dbReference>
<dbReference type="CDD" id="cd21601">
    <property type="entry name" value="RRM1_PES4_MIP6"/>
    <property type="match status" value="1"/>
</dbReference>
<dbReference type="CDD" id="cd21602">
    <property type="entry name" value="RRM2_PES4_MIP6"/>
    <property type="match status" value="1"/>
</dbReference>
<dbReference type="CDD" id="cd21603">
    <property type="entry name" value="RRM3_PES4_MIP6"/>
    <property type="match status" value="1"/>
</dbReference>
<dbReference type="CDD" id="cd21604">
    <property type="entry name" value="RRM4_PES4_MIP6"/>
    <property type="match status" value="1"/>
</dbReference>
<dbReference type="FunFam" id="3.30.70.330:FF:000632">
    <property type="entry name" value="Poly(A) binding protein"/>
    <property type="match status" value="1"/>
</dbReference>
<dbReference type="Gene3D" id="3.30.70.330">
    <property type="match status" value="4"/>
</dbReference>
<dbReference type="InterPro" id="IPR050502">
    <property type="entry name" value="Euk_RNA-bind_prot"/>
</dbReference>
<dbReference type="InterPro" id="IPR012677">
    <property type="entry name" value="Nucleotide-bd_a/b_plait_sf"/>
</dbReference>
<dbReference type="InterPro" id="IPR035979">
    <property type="entry name" value="RBD_domain_sf"/>
</dbReference>
<dbReference type="InterPro" id="IPR000504">
    <property type="entry name" value="RRM_dom"/>
</dbReference>
<dbReference type="PANTHER" id="PTHR48025">
    <property type="entry name" value="OS02G0815200 PROTEIN"/>
    <property type="match status" value="1"/>
</dbReference>
<dbReference type="PANTHER" id="PTHR48025:SF1">
    <property type="entry name" value="RRM DOMAIN-CONTAINING PROTEIN"/>
    <property type="match status" value="1"/>
</dbReference>
<dbReference type="Pfam" id="PF00076">
    <property type="entry name" value="RRM_1"/>
    <property type="match status" value="3"/>
</dbReference>
<dbReference type="SMART" id="SM00360">
    <property type="entry name" value="RRM"/>
    <property type="match status" value="4"/>
</dbReference>
<dbReference type="SUPFAM" id="SSF54928">
    <property type="entry name" value="RNA-binding domain, RBD"/>
    <property type="match status" value="2"/>
</dbReference>
<dbReference type="PROSITE" id="PS50102">
    <property type="entry name" value="RRM"/>
    <property type="match status" value="3"/>
</dbReference>
<gene>
    <name type="primary">MIP6</name>
    <name type="ordered locus">YHR015W</name>
</gene>
<feature type="chain" id="PRO_0000082032" description="RNA-binding protein MIP6">
    <location>
        <begin position="1"/>
        <end position="659"/>
    </location>
</feature>
<feature type="domain" description="RRM 1" evidence="1">
    <location>
        <begin position="111"/>
        <end position="189"/>
    </location>
</feature>
<feature type="domain" description="RRM 2" evidence="1">
    <location>
        <begin position="199"/>
        <end position="267"/>
    </location>
</feature>
<feature type="domain" description="RRM 3" evidence="1">
    <location>
        <begin position="313"/>
        <end position="389"/>
    </location>
</feature>
<feature type="region of interest" description="Disordered" evidence="2">
    <location>
        <begin position="1"/>
        <end position="35"/>
    </location>
</feature>
<feature type="compositionally biased region" description="Polar residues" evidence="2">
    <location>
        <begin position="1"/>
        <end position="27"/>
    </location>
</feature>
<feature type="strand" evidence="6">
    <location>
        <begin position="314"/>
        <end position="318"/>
    </location>
</feature>
<feature type="helix" evidence="6">
    <location>
        <begin position="326"/>
        <end position="333"/>
    </location>
</feature>
<feature type="turn" evidence="6">
    <location>
        <begin position="334"/>
        <end position="336"/>
    </location>
</feature>
<feature type="strand" evidence="6">
    <location>
        <begin position="339"/>
        <end position="344"/>
    </location>
</feature>
<feature type="strand" evidence="6">
    <location>
        <begin position="354"/>
        <end position="361"/>
    </location>
</feature>
<feature type="helix" evidence="6">
    <location>
        <begin position="362"/>
        <end position="372"/>
    </location>
</feature>
<feature type="strand" evidence="6">
    <location>
        <begin position="375"/>
        <end position="377"/>
    </location>
</feature>
<feature type="strand" evidence="6">
    <location>
        <begin position="380"/>
        <end position="386"/>
    </location>
</feature>
<comment type="subunit">
    <text evidence="5">Interacts with MEX67.</text>
</comment>
<comment type="subcellular location">
    <subcellularLocation>
        <location evidence="3">Cytoplasm</location>
    </subcellularLocation>
</comment>
<comment type="miscellaneous">
    <text evidence="4">Present with 98 molecules/cell in log phase SD medium.</text>
</comment>
<evidence type="ECO:0000255" key="1">
    <source>
        <dbReference type="PROSITE-ProRule" id="PRU00176"/>
    </source>
</evidence>
<evidence type="ECO:0000256" key="2">
    <source>
        <dbReference type="SAM" id="MobiDB-lite"/>
    </source>
</evidence>
<evidence type="ECO:0000269" key="3">
    <source>
    </source>
</evidence>
<evidence type="ECO:0000269" key="4">
    <source>
    </source>
</evidence>
<evidence type="ECO:0000269" key="5">
    <source>
    </source>
</evidence>
<evidence type="ECO:0007829" key="6">
    <source>
        <dbReference type="PDB" id="5D78"/>
    </source>
</evidence>
<sequence>MPNSHGNVLNNISLNSKQNPRSISKSCPNDKDARQKSFKTISAQALVRVQGAGYKLGDVKLKDAEVKEKNSLKKYDCKNATQEKKEQEQVFEKTVAKGSVQKYITKTSKTNSLFIGNLKSTVTEEMLRKIFKRYQSFESAKVCRDFLTKKSLGYGYLNFKDKNDAESARKEFNYTVFFGQEVKIMPSMKNTLFRKNIGTNVFFSNLPLENPQLTTRSFYLIMIEYGNVLSCLLERRKNIGFVYFDNDISARNVIKKYNNQEFFGNKIICGLHFDKEVRTRPEFTKRKKMIGSDIVIEDELLASNNLSDNARSKTILVKNLPSDTTQEEVLDYFSTIGPIKSVFISEKQANTPHKAFVTYKNEEESKKAQKCLNKTIFKNHTIWVGPGKDKPVHNQIGTNKKTKVYLKNLSFNCNKEFISQLCLQEKIRFSEIKITNYNSLNWTFCGHVECFSRSDAERLFNILDRRLIGSSLVEASWSKNNDNILNEIDYDDGNNNENYKKLINISSMMRFRTQELSAHQKGLTSQFQQVVSPFSSYSNSYTNMNSLVATPMKPHPAFNLITNTVDEKLHQPKRTKQENAEILESLKKIINRNLQRISISGLNKEENLRSISEFIFDVFWEHDSERLSHFLLMTNTSLESQKILQKQVTRAAESLGFTV</sequence>
<proteinExistence type="evidence at protein level"/>
<keyword id="KW-0002">3D-structure</keyword>
<keyword id="KW-0963">Cytoplasm</keyword>
<keyword id="KW-1185">Reference proteome</keyword>
<keyword id="KW-0677">Repeat</keyword>
<keyword id="KW-0694">RNA-binding</keyword>
<organism>
    <name type="scientific">Saccharomyces cerevisiae (strain ATCC 204508 / S288c)</name>
    <name type="common">Baker's yeast</name>
    <dbReference type="NCBI Taxonomy" id="559292"/>
    <lineage>
        <taxon>Eukaryota</taxon>
        <taxon>Fungi</taxon>
        <taxon>Dikarya</taxon>
        <taxon>Ascomycota</taxon>
        <taxon>Saccharomycotina</taxon>
        <taxon>Saccharomycetes</taxon>
        <taxon>Saccharomycetales</taxon>
        <taxon>Saccharomycetaceae</taxon>
        <taxon>Saccharomyces</taxon>
    </lineage>
</organism>